<evidence type="ECO:0000255" key="1">
    <source>
        <dbReference type="HAMAP-Rule" id="MF_03125"/>
    </source>
</evidence>
<evidence type="ECO:0000312" key="2">
    <source>
        <dbReference type="EMBL" id="VUC56732.1"/>
    </source>
</evidence>
<evidence type="ECO:0000312" key="3">
    <source>
        <dbReference type="Proteomes" id="UP000074855"/>
    </source>
</evidence>
<name>PURA_PLABA</name>
<organism>
    <name type="scientific">Plasmodium berghei (strain Anka)</name>
    <dbReference type="NCBI Taxonomy" id="5823"/>
    <lineage>
        <taxon>Eukaryota</taxon>
        <taxon>Sar</taxon>
        <taxon>Alveolata</taxon>
        <taxon>Apicomplexa</taxon>
        <taxon>Aconoidasida</taxon>
        <taxon>Haemosporida</taxon>
        <taxon>Plasmodiidae</taxon>
        <taxon>Plasmodium</taxon>
        <taxon>Plasmodium (Vinckeia)</taxon>
    </lineage>
</organism>
<protein>
    <recommendedName>
        <fullName evidence="1">Adenylosuccinate synthetase</fullName>
        <shortName evidence="1">AMPSase</shortName>
        <shortName evidence="1">AdSS</shortName>
        <ecNumber evidence="1">6.3.4.4</ecNumber>
    </recommendedName>
    <alternativeName>
        <fullName evidence="1">IMP--aspartate ligase</fullName>
    </alternativeName>
</protein>
<keyword id="KW-0963">Cytoplasm</keyword>
<keyword id="KW-0342">GTP-binding</keyword>
<keyword id="KW-0436">Ligase</keyword>
<keyword id="KW-0460">Magnesium</keyword>
<keyword id="KW-0479">Metal-binding</keyword>
<keyword id="KW-0547">Nucleotide-binding</keyword>
<keyword id="KW-0658">Purine biosynthesis</keyword>
<keyword id="KW-1185">Reference proteome</keyword>
<sequence>MNIFEHSIKNVDKGNVVAIVGTQWGDEGKGKIIDILSKYSDITCRFNGGGNAGHTICVGDKKHALHLLPCGVLYENNINILGNCMVIHLKTLMKEINNLGNNILDRIYISEKAHILFDIHQEIDAIQEIRKSKDGNAIGTTKKGIGPCYSTKASRIGIRMGSLRNFENFKKLYIKLIDNLMDLYNIKDYNKEEELNEFYTYHLIFKDKIINIISYINKSIDSKKYILIEGANAAMLDIDLGTYPFVTSSSTTLGGIFSGLGIHHKKLNLVVGVVKSYLTRVGSGPFLTEQCNEIGEYLTKKGFEYGTTTKRPRRCGWLDLPMIFYVKYINCIDIINLTKLDVLSGLKEIYICIDYKNKTTGELLERGNYPLEYEQLREYEPVYEKFEGWDEDITNCIEFYELPENAKKYVLAIESYIKTPIVWIGVGPTRNNTITRKFD</sequence>
<feature type="chain" id="PRO_0000399291" description="Adenylosuccinate synthetase">
    <location>
        <begin position="1"/>
        <end position="439"/>
    </location>
</feature>
<feature type="active site" description="Proton acceptor" evidence="1">
    <location>
        <position position="26"/>
    </location>
</feature>
<feature type="active site" description="Proton donor" evidence="1">
    <location>
        <position position="54"/>
    </location>
</feature>
<feature type="binding site" evidence="1">
    <location>
        <begin position="25"/>
        <end position="31"/>
    </location>
    <ligand>
        <name>GTP</name>
        <dbReference type="ChEBI" id="CHEBI:37565"/>
    </ligand>
</feature>
<feature type="binding site" description="in other chain" evidence="1">
    <location>
        <begin position="26"/>
        <end position="29"/>
    </location>
    <ligand>
        <name>IMP</name>
        <dbReference type="ChEBI" id="CHEBI:58053"/>
        <note>ligand shared between dimeric partners</note>
    </ligand>
</feature>
<feature type="binding site" evidence="1">
    <location>
        <position position="26"/>
    </location>
    <ligand>
        <name>Mg(2+)</name>
        <dbReference type="ChEBI" id="CHEBI:18420"/>
    </ligand>
</feature>
<feature type="binding site" description="in other chain" evidence="1">
    <location>
        <begin position="51"/>
        <end position="54"/>
    </location>
    <ligand>
        <name>IMP</name>
        <dbReference type="ChEBI" id="CHEBI:58053"/>
        <note>ligand shared between dimeric partners</note>
    </ligand>
</feature>
<feature type="binding site" evidence="1">
    <location>
        <begin position="53"/>
        <end position="55"/>
    </location>
    <ligand>
        <name>GTP</name>
        <dbReference type="ChEBI" id="CHEBI:37565"/>
    </ligand>
</feature>
<feature type="binding site" evidence="1">
    <location>
        <position position="53"/>
    </location>
    <ligand>
        <name>Mg(2+)</name>
        <dbReference type="ChEBI" id="CHEBI:18420"/>
    </ligand>
</feature>
<feature type="binding site" evidence="1">
    <location>
        <position position="62"/>
    </location>
    <ligand>
        <name>GTP</name>
        <dbReference type="ChEBI" id="CHEBI:37565"/>
    </ligand>
</feature>
<feature type="binding site" description="in other chain" evidence="1">
    <location>
        <position position="141"/>
    </location>
    <ligand>
        <name>IMP</name>
        <dbReference type="ChEBI" id="CHEBI:58053"/>
        <note>ligand shared between dimeric partners</note>
    </ligand>
</feature>
<feature type="binding site" evidence="1">
    <location>
        <position position="155"/>
    </location>
    <ligand>
        <name>IMP</name>
        <dbReference type="ChEBI" id="CHEBI:58053"/>
        <note>ligand shared between dimeric partners</note>
    </ligand>
</feature>
<feature type="binding site" description="in other chain" evidence="1">
    <location>
        <position position="232"/>
    </location>
    <ligand>
        <name>IMP</name>
        <dbReference type="ChEBI" id="CHEBI:58053"/>
        <note>ligand shared between dimeric partners</note>
    </ligand>
</feature>
<feature type="binding site" description="in other chain" evidence="1">
    <location>
        <position position="247"/>
    </location>
    <ligand>
        <name>IMP</name>
        <dbReference type="ChEBI" id="CHEBI:58053"/>
        <note>ligand shared between dimeric partners</note>
    </ligand>
</feature>
<feature type="binding site" evidence="1">
    <location>
        <begin position="307"/>
        <end position="313"/>
    </location>
    <ligand>
        <name>substrate</name>
    </ligand>
</feature>
<feature type="binding site" evidence="1">
    <location>
        <position position="307"/>
    </location>
    <ligand>
        <name>GTP</name>
        <dbReference type="ChEBI" id="CHEBI:37565"/>
    </ligand>
</feature>
<feature type="binding site" description="in other chain" evidence="1">
    <location>
        <position position="311"/>
    </location>
    <ligand>
        <name>IMP</name>
        <dbReference type="ChEBI" id="CHEBI:58053"/>
        <note>ligand shared between dimeric partners</note>
    </ligand>
</feature>
<feature type="binding site" evidence="1">
    <location>
        <position position="313"/>
    </location>
    <ligand>
        <name>GTP</name>
        <dbReference type="ChEBI" id="CHEBI:37565"/>
    </ligand>
</feature>
<feature type="binding site" evidence="1">
    <location>
        <begin position="339"/>
        <end position="341"/>
    </location>
    <ligand>
        <name>GTP</name>
        <dbReference type="ChEBI" id="CHEBI:37565"/>
    </ligand>
</feature>
<feature type="binding site" evidence="1">
    <location>
        <begin position="425"/>
        <end position="427"/>
    </location>
    <ligand>
        <name>GTP</name>
        <dbReference type="ChEBI" id="CHEBI:37565"/>
    </ligand>
</feature>
<accession>Q4YU52</accession>
<accession>A0A509AL78</accession>
<proteinExistence type="inferred from homology"/>
<dbReference type="EC" id="6.3.4.4" evidence="1"/>
<dbReference type="EMBL" id="LK023126">
    <property type="protein sequence ID" value="VUC56732.1"/>
    <property type="molecule type" value="Genomic_DNA"/>
</dbReference>
<dbReference type="RefSeq" id="XP_679491.1">
    <property type="nucleotide sequence ID" value="XM_674399.1"/>
</dbReference>
<dbReference type="SMR" id="Q4YU52"/>
<dbReference type="STRING" id="5823.A0A509AL78"/>
<dbReference type="VEuPathDB" id="PlasmoDB:PBANKA_1131100"/>
<dbReference type="eggNOG" id="KOG1355">
    <property type="taxonomic scope" value="Eukaryota"/>
</dbReference>
<dbReference type="HOGENOM" id="CLU_029848_0_0_1"/>
<dbReference type="InParanoid" id="A0A509AL78"/>
<dbReference type="OMA" id="FHHAKPI"/>
<dbReference type="UniPathway" id="UPA00075">
    <property type="reaction ID" value="UER00335"/>
</dbReference>
<dbReference type="Proteomes" id="UP000074855">
    <property type="component" value="Chromosome 11"/>
</dbReference>
<dbReference type="GO" id="GO:0005737">
    <property type="term" value="C:cytoplasm"/>
    <property type="evidence" value="ECO:0007669"/>
    <property type="project" value="UniProtKB-SubCell"/>
</dbReference>
<dbReference type="GO" id="GO:0004019">
    <property type="term" value="F:adenylosuccinate synthase activity"/>
    <property type="evidence" value="ECO:0007669"/>
    <property type="project" value="UniProtKB-UniRule"/>
</dbReference>
<dbReference type="GO" id="GO:0005525">
    <property type="term" value="F:GTP binding"/>
    <property type="evidence" value="ECO:0007669"/>
    <property type="project" value="UniProtKB-UniRule"/>
</dbReference>
<dbReference type="GO" id="GO:0000287">
    <property type="term" value="F:magnesium ion binding"/>
    <property type="evidence" value="ECO:0007669"/>
    <property type="project" value="UniProtKB-UniRule"/>
</dbReference>
<dbReference type="GO" id="GO:0044208">
    <property type="term" value="P:'de novo' AMP biosynthetic process"/>
    <property type="evidence" value="ECO:0007669"/>
    <property type="project" value="UniProtKB-UniRule"/>
</dbReference>
<dbReference type="GO" id="GO:0046040">
    <property type="term" value="P:IMP metabolic process"/>
    <property type="evidence" value="ECO:0007669"/>
    <property type="project" value="TreeGrafter"/>
</dbReference>
<dbReference type="CDD" id="cd03108">
    <property type="entry name" value="AdSS"/>
    <property type="match status" value="1"/>
</dbReference>
<dbReference type="FunFam" id="3.90.170.10:FF:000001">
    <property type="entry name" value="Adenylosuccinate synthetase"/>
    <property type="match status" value="1"/>
</dbReference>
<dbReference type="Gene3D" id="3.40.440.10">
    <property type="entry name" value="Adenylosuccinate Synthetase, subunit A, domain 1"/>
    <property type="match status" value="1"/>
</dbReference>
<dbReference type="Gene3D" id="1.10.300.10">
    <property type="entry name" value="Adenylosuccinate Synthetase, subunit A, domain 2"/>
    <property type="match status" value="1"/>
</dbReference>
<dbReference type="Gene3D" id="3.90.170.10">
    <property type="entry name" value="Adenylosuccinate Synthetase, subunit A, domain 3"/>
    <property type="match status" value="1"/>
</dbReference>
<dbReference type="HAMAP" id="MF_00011">
    <property type="entry name" value="Adenylosucc_synth"/>
    <property type="match status" value="1"/>
</dbReference>
<dbReference type="InterPro" id="IPR018220">
    <property type="entry name" value="Adenylosuccin_syn_GTP-bd"/>
</dbReference>
<dbReference type="InterPro" id="IPR033128">
    <property type="entry name" value="Adenylosuccin_syn_Lys_AS"/>
</dbReference>
<dbReference type="InterPro" id="IPR042109">
    <property type="entry name" value="Adenylosuccinate_synth_dom1"/>
</dbReference>
<dbReference type="InterPro" id="IPR042110">
    <property type="entry name" value="Adenylosuccinate_synth_dom2"/>
</dbReference>
<dbReference type="InterPro" id="IPR042111">
    <property type="entry name" value="Adenylosuccinate_synth_dom3"/>
</dbReference>
<dbReference type="InterPro" id="IPR001114">
    <property type="entry name" value="Adenylosuccinate_synthetase"/>
</dbReference>
<dbReference type="InterPro" id="IPR027417">
    <property type="entry name" value="P-loop_NTPase"/>
</dbReference>
<dbReference type="NCBIfam" id="NF002223">
    <property type="entry name" value="PRK01117.1"/>
    <property type="match status" value="1"/>
</dbReference>
<dbReference type="NCBIfam" id="TIGR00184">
    <property type="entry name" value="purA"/>
    <property type="match status" value="1"/>
</dbReference>
<dbReference type="PANTHER" id="PTHR11846">
    <property type="entry name" value="ADENYLOSUCCINATE SYNTHETASE"/>
    <property type="match status" value="1"/>
</dbReference>
<dbReference type="PANTHER" id="PTHR11846:SF0">
    <property type="entry name" value="ADENYLOSUCCINATE SYNTHETASE"/>
    <property type="match status" value="1"/>
</dbReference>
<dbReference type="Pfam" id="PF00709">
    <property type="entry name" value="Adenylsucc_synt"/>
    <property type="match status" value="1"/>
</dbReference>
<dbReference type="SMART" id="SM00788">
    <property type="entry name" value="Adenylsucc_synt"/>
    <property type="match status" value="1"/>
</dbReference>
<dbReference type="SUPFAM" id="SSF52540">
    <property type="entry name" value="P-loop containing nucleoside triphosphate hydrolases"/>
    <property type="match status" value="1"/>
</dbReference>
<dbReference type="PROSITE" id="PS01266">
    <property type="entry name" value="ADENYLOSUCCIN_SYN_1"/>
    <property type="match status" value="1"/>
</dbReference>
<dbReference type="PROSITE" id="PS00513">
    <property type="entry name" value="ADENYLOSUCCIN_SYN_2"/>
    <property type="match status" value="1"/>
</dbReference>
<gene>
    <name type="primary">ADSS</name>
    <name type="ORF">PB001073.02.0</name>
    <name evidence="2" type="ORF">PBANKA_1131100</name>
</gene>
<comment type="function">
    <text evidence="1">Plays an important role in the salvage pathway for purine nucleotide biosynthesis. Catalyzes the first commited step in the biosynthesis of AMP from IMP.</text>
</comment>
<comment type="catalytic activity">
    <reaction evidence="1">
        <text>IMP + L-aspartate + GTP = N(6)-(1,2-dicarboxyethyl)-AMP + GDP + phosphate + 2 H(+)</text>
        <dbReference type="Rhea" id="RHEA:15753"/>
        <dbReference type="ChEBI" id="CHEBI:15378"/>
        <dbReference type="ChEBI" id="CHEBI:29991"/>
        <dbReference type="ChEBI" id="CHEBI:37565"/>
        <dbReference type="ChEBI" id="CHEBI:43474"/>
        <dbReference type="ChEBI" id="CHEBI:57567"/>
        <dbReference type="ChEBI" id="CHEBI:58053"/>
        <dbReference type="ChEBI" id="CHEBI:58189"/>
        <dbReference type="EC" id="6.3.4.4"/>
    </reaction>
</comment>
<comment type="cofactor">
    <cofactor evidence="1">
        <name>Mg(2+)</name>
        <dbReference type="ChEBI" id="CHEBI:18420"/>
    </cofactor>
    <text evidence="1">Binds 1 Mg(2+) ion per subunit.</text>
</comment>
<comment type="pathway">
    <text evidence="1">Purine metabolism; AMP biosynthesis via de novo pathway; AMP from IMP: step 1/2.</text>
</comment>
<comment type="subunit">
    <text evidence="1">Homodimer.</text>
</comment>
<comment type="subcellular location">
    <subcellularLocation>
        <location evidence="1">Cytoplasm</location>
    </subcellularLocation>
</comment>
<comment type="miscellaneous">
    <text evidence="1">Parasitic protozoa lack the de novo purine biosynthesis pathway and rely exclusively on the salvage pathway for their purine nucleotide requirements.</text>
</comment>
<comment type="similarity">
    <text evidence="1">Belongs to the adenylosuccinate synthetase family.</text>
</comment>
<reference evidence="3" key="1">
    <citation type="journal article" date="2014" name="BMC Biol.">
        <title>A comprehensive evaluation of rodent malaria parasite genomes and gene expression.</title>
        <authorList>
            <person name="Otto T.D."/>
            <person name="Bohme U."/>
            <person name="Jackson A.P."/>
            <person name="Hunt M."/>
            <person name="Franke-Fayard B."/>
            <person name="Hoeijmakers W.A."/>
            <person name="Religa A.A."/>
            <person name="Robertson L."/>
            <person name="Sanders M."/>
            <person name="Ogun S.A."/>
            <person name="Cunningham D."/>
            <person name="Erhart A."/>
            <person name="Billker O."/>
            <person name="Khan S.M."/>
            <person name="Stunnenberg H.G."/>
            <person name="Langhorne J."/>
            <person name="Holder A.A."/>
            <person name="Waters A.P."/>
            <person name="Newbold C.I."/>
            <person name="Pain A."/>
            <person name="Berriman M."/>
            <person name="Janse C.J."/>
        </authorList>
    </citation>
    <scope>NUCLEOTIDE SEQUENCE [LARGE SCALE GENOMIC DNA]</scope>
    <source>
        <strain evidence="3">ANKA</strain>
    </source>
</reference>